<reference key="1">
    <citation type="journal article" date="1991" name="Nucleic Acids Res.">
        <title>Molecular cloning and characterization of the gene encoding the adenine methyltransferase M.CviRI from Chlorella virus XZ-6E.</title>
        <authorList>
            <person name="Stefan G."/>
            <person name="Xia Y."/>
            <person name="van Etten J.L."/>
        </authorList>
    </citation>
    <scope>NUCLEOTIDE SEQUENCE [GENOMIC DNA]</scope>
    <scope>FUNCTION</scope>
</reference>
<reference key="2">
    <citation type="journal article" date="2003" name="Nucleic Acids Res.">
        <title>A nomenclature for restriction enzymes, DNA methyltransferases, homing endonucleases and their genes.</title>
        <authorList>
            <person name="Roberts R.J."/>
            <person name="Belfort M."/>
            <person name="Bestor T."/>
            <person name="Bhagwat A.S."/>
            <person name="Bickle T.A."/>
            <person name="Bitinaite J."/>
            <person name="Blumenthal R.M."/>
            <person name="Degtyarev S.K."/>
            <person name="Dryden D.T."/>
            <person name="Dybvig K."/>
            <person name="Firman K."/>
            <person name="Gromova E.S."/>
            <person name="Gumport R.I."/>
            <person name="Halford S.E."/>
            <person name="Hattman S."/>
            <person name="Heitman J."/>
            <person name="Hornby D.P."/>
            <person name="Janulaitis A."/>
            <person name="Jeltsch A."/>
            <person name="Josephsen J."/>
            <person name="Kiss A."/>
            <person name="Klaenhammer T.R."/>
            <person name="Kobayashi I."/>
            <person name="Kong H."/>
            <person name="Krueger D.H."/>
            <person name="Lacks S."/>
            <person name="Marinus M.G."/>
            <person name="Miyahara M."/>
            <person name="Morgan R.D."/>
            <person name="Murray N.E."/>
            <person name="Nagaraja V."/>
            <person name="Piekarowicz A."/>
            <person name="Pingoud A."/>
            <person name="Raleigh E."/>
            <person name="Rao D.N."/>
            <person name="Reich N."/>
            <person name="Repin V.E."/>
            <person name="Selker E.U."/>
            <person name="Shaw P.C."/>
            <person name="Stein D.C."/>
            <person name="Stoddard B.L."/>
            <person name="Szybalski W."/>
            <person name="Trautner T.A."/>
            <person name="Van Etten J.L."/>
            <person name="Vitor J.M."/>
            <person name="Wilson G.G."/>
            <person name="Xu S.Y."/>
        </authorList>
    </citation>
    <scope>NOMENCLATURE</scope>
    <scope>SUBTYPE</scope>
</reference>
<comment type="function">
    <text evidence="1 4">A gamma subtype methylase, recognizes the double-stranded sequence 5'-TGCA-3', methylates A-4 on both strands, and protects the DNA from cleavage by the CviRI endonuclease.</text>
</comment>
<comment type="catalytic activity">
    <reaction>
        <text>a 2'-deoxyadenosine in DNA + S-adenosyl-L-methionine = an N(6)-methyl-2'-deoxyadenosine in DNA + S-adenosyl-L-homocysteine + H(+)</text>
        <dbReference type="Rhea" id="RHEA:15197"/>
        <dbReference type="Rhea" id="RHEA-COMP:12418"/>
        <dbReference type="Rhea" id="RHEA-COMP:12419"/>
        <dbReference type="ChEBI" id="CHEBI:15378"/>
        <dbReference type="ChEBI" id="CHEBI:57856"/>
        <dbReference type="ChEBI" id="CHEBI:59789"/>
        <dbReference type="ChEBI" id="CHEBI:90615"/>
        <dbReference type="ChEBI" id="CHEBI:90616"/>
        <dbReference type="EC" id="2.1.1.72"/>
    </reaction>
</comment>
<comment type="similarity">
    <text evidence="3">Belongs to the N(4)/N(6)-methyltransferase family.</text>
</comment>
<name>MTR1_PBCVX</name>
<organismHost>
    <name type="scientific">Chlorella</name>
    <dbReference type="NCBI Taxonomy" id="3071"/>
</organismHost>
<protein>
    <recommendedName>
        <fullName evidence="1">Type II methyltransferase M.CvrRI</fullName>
        <shortName evidence="2">M.CviRI</shortName>
        <ecNumber>2.1.1.72</ecNumber>
    </recommendedName>
    <alternativeName>
        <fullName>Adenine-specific methyltransferase CviRI</fullName>
    </alternativeName>
    <alternativeName>
        <fullName>Modification methylase CviRI</fullName>
    </alternativeName>
</protein>
<dbReference type="EC" id="2.1.1.72"/>
<dbReference type="EMBL" id="M38173">
    <property type="protein sequence ID" value="AAA42900.1"/>
    <property type="molecule type" value="Genomic_DNA"/>
</dbReference>
<dbReference type="SMR" id="P52284"/>
<dbReference type="REBASE" id="3355">
    <property type="entry name" value="M.CviRI"/>
</dbReference>
<dbReference type="PRO" id="PR:P52284"/>
<dbReference type="GO" id="GO:0003677">
    <property type="term" value="F:DNA binding"/>
    <property type="evidence" value="ECO:0007669"/>
    <property type="project" value="UniProtKB-KW"/>
</dbReference>
<dbReference type="GO" id="GO:0008170">
    <property type="term" value="F:N-methyltransferase activity"/>
    <property type="evidence" value="ECO:0007669"/>
    <property type="project" value="InterPro"/>
</dbReference>
<dbReference type="GO" id="GO:0009007">
    <property type="term" value="F:site-specific DNA-methyltransferase (adenine-specific) activity"/>
    <property type="evidence" value="ECO:0007669"/>
    <property type="project" value="UniProtKB-EC"/>
</dbReference>
<dbReference type="GO" id="GO:0009307">
    <property type="term" value="P:DNA restriction-modification system"/>
    <property type="evidence" value="ECO:0007669"/>
    <property type="project" value="UniProtKB-KW"/>
</dbReference>
<dbReference type="GO" id="GO:0032259">
    <property type="term" value="P:methylation"/>
    <property type="evidence" value="ECO:0007669"/>
    <property type="project" value="UniProtKB-KW"/>
</dbReference>
<dbReference type="CDD" id="cd02440">
    <property type="entry name" value="AdoMet_MTases"/>
    <property type="match status" value="1"/>
</dbReference>
<dbReference type="Gene3D" id="3.40.50.150">
    <property type="entry name" value="Vaccinia Virus protein VP39"/>
    <property type="match status" value="1"/>
</dbReference>
<dbReference type="InterPro" id="IPR003356">
    <property type="entry name" value="DNA_methylase_A-5"/>
</dbReference>
<dbReference type="InterPro" id="IPR002052">
    <property type="entry name" value="DNA_methylase_N6_adenine_CS"/>
</dbReference>
<dbReference type="InterPro" id="IPR050953">
    <property type="entry name" value="N4_N6_ade-DNA_methylase"/>
</dbReference>
<dbReference type="InterPro" id="IPR029063">
    <property type="entry name" value="SAM-dependent_MTases_sf"/>
</dbReference>
<dbReference type="PANTHER" id="PTHR33841:SF1">
    <property type="entry name" value="DNA METHYLTRANSFERASE A"/>
    <property type="match status" value="1"/>
</dbReference>
<dbReference type="PANTHER" id="PTHR33841">
    <property type="entry name" value="DNA METHYLTRANSFERASE YEEA-RELATED"/>
    <property type="match status" value="1"/>
</dbReference>
<dbReference type="Pfam" id="PF02384">
    <property type="entry name" value="N6_Mtase"/>
    <property type="match status" value="1"/>
</dbReference>
<dbReference type="PRINTS" id="PR00507">
    <property type="entry name" value="N12N6MTFRASE"/>
</dbReference>
<dbReference type="SUPFAM" id="SSF53335">
    <property type="entry name" value="S-adenosyl-L-methionine-dependent methyltransferases"/>
    <property type="match status" value="1"/>
</dbReference>
<dbReference type="PROSITE" id="PS00092">
    <property type="entry name" value="N6_MTASE"/>
    <property type="match status" value="1"/>
</dbReference>
<feature type="chain" id="PRO_0000087949" description="Type II methyltransferase M.CvrRI">
    <location>
        <begin position="1"/>
        <end position="379"/>
    </location>
</feature>
<accession>P52284</accession>
<proteinExistence type="inferred from homology"/>
<keyword id="KW-0238">DNA-binding</keyword>
<keyword id="KW-0489">Methyltransferase</keyword>
<keyword id="KW-0680">Restriction system</keyword>
<keyword id="KW-0949">S-adenosyl-L-methionine</keyword>
<keyword id="KW-0808">Transferase</keyword>
<organism>
    <name type="scientific">Paramecium bursaria Chlorella virus XZ-6E</name>
    <name type="common">PBCV-XZ-6E</name>
    <dbReference type="NCBI Taxonomy" id="36360"/>
    <lineage>
        <taxon>Viruses</taxon>
        <taxon>Varidnaviria</taxon>
        <taxon>Bamfordvirae</taxon>
        <taxon>Nucleocytoviricota</taxon>
        <taxon>Megaviricetes</taxon>
        <taxon>Algavirales</taxon>
        <taxon>Phycodnaviridae</taxon>
        <taxon>Chlorovirus</taxon>
    </lineage>
</organism>
<gene>
    <name type="primary">CVIRIM</name>
</gene>
<sequence>MKLFEDKSVEFHKRLSKKERSDGGVFFTPKDIRDIVFEELGDFEPTNILEPTCGTGEFISDCRKVYKNSRIIGVEIDPRSAELARDGSKNEIIVHDFMTWDTDEKFDLIIGNPPYFTRPTGFKHDPSVVKCRSNICIEVLHKCITRHLADNGMLAMVLPVSILNSKFYTPTIDLITDTMDVVSARAIKKNNFMGTNVRVMVFIIRKRTPGFVSKYTFKTSLGKVIINPDGERLGSIVSGKKTIGSLNVNISFGVTLASVKEYFVDKSCSGSFPLICYNNIAKKGDLLFVSDKYSKKRFNGRAILIPRGYAHGDYSFNFIDYTNDYFIIENHVIAITGEDCVLDIIAKSFADHRTREFCRLLCSSGDISKDYVKEIPVFG</sequence>
<evidence type="ECO:0000303" key="1">
    <source>
    </source>
</evidence>
<evidence type="ECO:0000303" key="2">
    <source>
    </source>
</evidence>
<evidence type="ECO:0000305" key="3"/>
<evidence type="ECO:0000305" key="4">
    <source>
    </source>
</evidence>